<organism>
    <name type="scientific">Oryza sativa subsp. japonica</name>
    <name type="common">Rice</name>
    <dbReference type="NCBI Taxonomy" id="39947"/>
    <lineage>
        <taxon>Eukaryota</taxon>
        <taxon>Viridiplantae</taxon>
        <taxon>Streptophyta</taxon>
        <taxon>Embryophyta</taxon>
        <taxon>Tracheophyta</taxon>
        <taxon>Spermatophyta</taxon>
        <taxon>Magnoliopsida</taxon>
        <taxon>Liliopsida</taxon>
        <taxon>Poales</taxon>
        <taxon>Poaceae</taxon>
        <taxon>BOP clade</taxon>
        <taxon>Oryzoideae</taxon>
        <taxon>Oryzeae</taxon>
        <taxon>Oryzinae</taxon>
        <taxon>Oryza</taxon>
        <taxon>Oryza sativa</taxon>
    </lineage>
</organism>
<accession>B9FMJ3</accession>
<accession>Q0DKM5</accession>
<accession>Q60F22</accession>
<reference key="1">
    <citation type="journal article" date="2010" name="Plant Cell Physiol.">
        <title>A novel kinesin 13 protein regulating rice seed length.</title>
        <authorList>
            <person name="Kitagawa K."/>
            <person name="Kurinami S."/>
            <person name="Oki K."/>
            <person name="Abe Y."/>
            <person name="Ando T."/>
            <person name="Kono I."/>
            <person name="Yano M."/>
            <person name="Kitano H."/>
            <person name="Iwasaki Y."/>
        </authorList>
    </citation>
    <scope>NUCLEOTIDE SEQUENCE [MRNA]</scope>
    <scope>MUTAGENESIS OF LEU-492</scope>
    <scope>SUBCELLULAR LOCATION</scope>
    <scope>TISSUE SPECIFICITY</scope>
    <scope>DEVELOPMENTAL STAGE</scope>
    <source>
        <strain>cv. Taichung 65</strain>
    </source>
</reference>
<reference key="2">
    <citation type="journal article" date="2005" name="Mol. Genet. Genomics">
        <title>A fine physical map of the rice chromosome 5.</title>
        <authorList>
            <person name="Cheng C.-H."/>
            <person name="Chung M.C."/>
            <person name="Liu S.-M."/>
            <person name="Chen S.-K."/>
            <person name="Kao F.Y."/>
            <person name="Lin S.-J."/>
            <person name="Hsiao S.-H."/>
            <person name="Tseng I.C."/>
            <person name="Hsing Y.-I.C."/>
            <person name="Wu H.-P."/>
            <person name="Chen C.-S."/>
            <person name="Shaw J.-F."/>
            <person name="Wu J."/>
            <person name="Matsumoto T."/>
            <person name="Sasaki T."/>
            <person name="Chen H.-C."/>
            <person name="Chow T.-Y."/>
        </authorList>
    </citation>
    <scope>NUCLEOTIDE SEQUENCE [LARGE SCALE GENOMIC DNA]</scope>
    <source>
        <strain>cv. Nipponbare</strain>
    </source>
</reference>
<reference key="3">
    <citation type="journal article" date="2005" name="Nature">
        <title>The map-based sequence of the rice genome.</title>
        <authorList>
            <consortium name="International rice genome sequencing project (IRGSP)"/>
        </authorList>
    </citation>
    <scope>NUCLEOTIDE SEQUENCE [LARGE SCALE GENOMIC DNA]</scope>
    <source>
        <strain>cv. Nipponbare</strain>
    </source>
</reference>
<reference key="4">
    <citation type="journal article" date="2008" name="Nucleic Acids Res.">
        <title>The rice annotation project database (RAP-DB): 2008 update.</title>
        <authorList>
            <consortium name="The rice annotation project (RAP)"/>
        </authorList>
    </citation>
    <scope>GENOME REANNOTATION</scope>
    <source>
        <strain>cv. Nipponbare</strain>
    </source>
</reference>
<reference key="5">
    <citation type="journal article" date="2013" name="Rice">
        <title>Improvement of the Oryza sativa Nipponbare reference genome using next generation sequence and optical map data.</title>
        <authorList>
            <person name="Kawahara Y."/>
            <person name="de la Bastide M."/>
            <person name="Hamilton J.P."/>
            <person name="Kanamori H."/>
            <person name="McCombie W.R."/>
            <person name="Ouyang S."/>
            <person name="Schwartz D.C."/>
            <person name="Tanaka T."/>
            <person name="Wu J."/>
            <person name="Zhou S."/>
            <person name="Childs K.L."/>
            <person name="Davidson R.M."/>
            <person name="Lin H."/>
            <person name="Quesada-Ocampo L."/>
            <person name="Vaillancourt B."/>
            <person name="Sakai H."/>
            <person name="Lee S.S."/>
            <person name="Kim J."/>
            <person name="Numa H."/>
            <person name="Itoh T."/>
            <person name="Buell C.R."/>
            <person name="Matsumoto T."/>
        </authorList>
    </citation>
    <scope>GENOME REANNOTATION</scope>
    <source>
        <strain>cv. Nipponbare</strain>
    </source>
</reference>
<reference key="6">
    <citation type="journal article" date="2005" name="PLoS Biol.">
        <title>The genomes of Oryza sativa: a history of duplications.</title>
        <authorList>
            <person name="Yu J."/>
            <person name="Wang J."/>
            <person name="Lin W."/>
            <person name="Li S."/>
            <person name="Li H."/>
            <person name="Zhou J."/>
            <person name="Ni P."/>
            <person name="Dong W."/>
            <person name="Hu S."/>
            <person name="Zeng C."/>
            <person name="Zhang J."/>
            <person name="Zhang Y."/>
            <person name="Li R."/>
            <person name="Xu Z."/>
            <person name="Li S."/>
            <person name="Li X."/>
            <person name="Zheng H."/>
            <person name="Cong L."/>
            <person name="Lin L."/>
            <person name="Yin J."/>
            <person name="Geng J."/>
            <person name="Li G."/>
            <person name="Shi J."/>
            <person name="Liu J."/>
            <person name="Lv H."/>
            <person name="Li J."/>
            <person name="Wang J."/>
            <person name="Deng Y."/>
            <person name="Ran L."/>
            <person name="Shi X."/>
            <person name="Wang X."/>
            <person name="Wu Q."/>
            <person name="Li C."/>
            <person name="Ren X."/>
            <person name="Wang J."/>
            <person name="Wang X."/>
            <person name="Li D."/>
            <person name="Liu D."/>
            <person name="Zhang X."/>
            <person name="Ji Z."/>
            <person name="Zhao W."/>
            <person name="Sun Y."/>
            <person name="Zhang Z."/>
            <person name="Bao J."/>
            <person name="Han Y."/>
            <person name="Dong L."/>
            <person name="Ji J."/>
            <person name="Chen P."/>
            <person name="Wu S."/>
            <person name="Liu J."/>
            <person name="Xiao Y."/>
            <person name="Bu D."/>
            <person name="Tan J."/>
            <person name="Yang L."/>
            <person name="Ye C."/>
            <person name="Zhang J."/>
            <person name="Xu J."/>
            <person name="Zhou Y."/>
            <person name="Yu Y."/>
            <person name="Zhang B."/>
            <person name="Zhuang S."/>
            <person name="Wei H."/>
            <person name="Liu B."/>
            <person name="Lei M."/>
            <person name="Yu H."/>
            <person name="Li Y."/>
            <person name="Xu H."/>
            <person name="Wei S."/>
            <person name="He X."/>
            <person name="Fang L."/>
            <person name="Zhang Z."/>
            <person name="Zhang Y."/>
            <person name="Huang X."/>
            <person name="Su Z."/>
            <person name="Tong W."/>
            <person name="Li J."/>
            <person name="Tong Z."/>
            <person name="Li S."/>
            <person name="Ye J."/>
            <person name="Wang L."/>
            <person name="Fang L."/>
            <person name="Lei T."/>
            <person name="Chen C.-S."/>
            <person name="Chen H.-C."/>
            <person name="Xu Z."/>
            <person name="Li H."/>
            <person name="Huang H."/>
            <person name="Zhang F."/>
            <person name="Xu H."/>
            <person name="Li N."/>
            <person name="Zhao C."/>
            <person name="Li S."/>
            <person name="Dong L."/>
            <person name="Huang Y."/>
            <person name="Li L."/>
            <person name="Xi Y."/>
            <person name="Qi Q."/>
            <person name="Li W."/>
            <person name="Zhang B."/>
            <person name="Hu W."/>
            <person name="Zhang Y."/>
            <person name="Tian X."/>
            <person name="Jiao Y."/>
            <person name="Liang X."/>
            <person name="Jin J."/>
            <person name="Gao L."/>
            <person name="Zheng W."/>
            <person name="Hao B."/>
            <person name="Liu S.-M."/>
            <person name="Wang W."/>
            <person name="Yuan L."/>
            <person name="Cao M."/>
            <person name="McDermott J."/>
            <person name="Samudrala R."/>
            <person name="Wang J."/>
            <person name="Wong G.K.-S."/>
            <person name="Yang H."/>
        </authorList>
    </citation>
    <scope>NUCLEOTIDE SEQUENCE [LARGE SCALE GENOMIC DNA]</scope>
    <source>
        <strain>cv. Nipponbare</strain>
    </source>
</reference>
<reference key="7">
    <citation type="journal article" date="2003" name="Science">
        <title>Collection, mapping, and annotation of over 28,000 cDNA clones from japonica rice.</title>
        <authorList>
            <consortium name="The rice full-length cDNA consortium"/>
        </authorList>
    </citation>
    <scope>NUCLEOTIDE SEQUENCE [LARGE SCALE MRNA] OF 354-819</scope>
    <source>
        <strain>cv. Nipponbare</strain>
    </source>
</reference>
<reference key="8">
    <citation type="journal article" date="2009" name="Ann. Bot.">
        <title>Evaluating the microtubule cytoskeleton and its interacting proteins in monocots by mining the rice genome.</title>
        <authorList>
            <person name="Guo L."/>
            <person name="Ho C.M."/>
            <person name="Kong Z."/>
            <person name="Lee Y.R."/>
            <person name="Qian Q."/>
            <person name="Liu B."/>
        </authorList>
    </citation>
    <scope>GENE FAMILY</scope>
    <scope>NOMENCLATURE</scope>
</reference>
<feature type="chain" id="PRO_0000437200" description="Kinesin-like protein KIN-13A">
    <location>
        <begin position="1"/>
        <end position="819"/>
    </location>
</feature>
<feature type="domain" description="Kinesin motor" evidence="2">
    <location>
        <begin position="199"/>
        <end position="535"/>
    </location>
</feature>
<feature type="region of interest" description="Disordered" evidence="3">
    <location>
        <begin position="150"/>
        <end position="178"/>
    </location>
</feature>
<feature type="region of interest" description="Disordered" evidence="3">
    <location>
        <begin position="534"/>
        <end position="729"/>
    </location>
</feature>
<feature type="coiled-coil region" evidence="1">
    <location>
        <begin position="736"/>
        <end position="767"/>
    </location>
</feature>
<feature type="compositionally biased region" description="Low complexity" evidence="3">
    <location>
        <begin position="550"/>
        <end position="562"/>
    </location>
</feature>
<feature type="compositionally biased region" description="Basic and acidic residues" evidence="3">
    <location>
        <begin position="577"/>
        <end position="589"/>
    </location>
</feature>
<feature type="compositionally biased region" description="Basic and acidic residues" evidence="3">
    <location>
        <begin position="614"/>
        <end position="631"/>
    </location>
</feature>
<feature type="compositionally biased region" description="Polar residues" evidence="3">
    <location>
        <begin position="632"/>
        <end position="652"/>
    </location>
</feature>
<feature type="compositionally biased region" description="Basic and acidic residues" evidence="3">
    <location>
        <begin position="669"/>
        <end position="686"/>
    </location>
</feature>
<feature type="compositionally biased region" description="Low complexity" evidence="3">
    <location>
        <begin position="697"/>
        <end position="719"/>
    </location>
</feature>
<feature type="binding site" evidence="2">
    <location>
        <begin position="289"/>
        <end position="296"/>
    </location>
    <ligand>
        <name>ATP</name>
        <dbReference type="ChEBI" id="CHEBI:30616"/>
    </ligand>
</feature>
<feature type="mutagenesis site" description="In srs3: Small and round seed. Shortened panicles and internodes." evidence="4">
    <original>L</original>
    <variation>F</variation>
    <location>
        <position position="492"/>
    </location>
</feature>
<feature type="sequence conflict" description="In Ref. 7; AK064328." evidence="7" ref="7">
    <original>I</original>
    <variation>V</variation>
    <location>
        <position position="735"/>
    </location>
</feature>
<protein>
    <recommendedName>
        <fullName evidence="7">Kinesin-like protein KIN-13A</fullName>
    </recommendedName>
    <alternativeName>
        <fullName evidence="5">Protein SMALL AND ROUND SEED 3</fullName>
    </alternativeName>
</protein>
<name>KN13A_ORYSJ</name>
<keyword id="KW-0067">ATP-binding</keyword>
<keyword id="KW-0175">Coiled coil</keyword>
<keyword id="KW-0256">Endoplasmic reticulum</keyword>
<keyword id="KW-0492">Microsome</keyword>
<keyword id="KW-0493">Microtubule</keyword>
<keyword id="KW-0505">Motor protein</keyword>
<keyword id="KW-0547">Nucleotide-binding</keyword>
<keyword id="KW-1185">Reference proteome</keyword>
<gene>
    <name evidence="7" type="primary">KIN13A</name>
    <name evidence="10" type="synonym">SRS3</name>
    <name evidence="11" type="ordered locus">Os05g0154700</name>
    <name evidence="7" type="ordered locus">LOC_Os05g06280</name>
    <name evidence="12" type="ORF">OsJ_17169</name>
    <name evidence="8" type="ORF">OSJNBa0059G01.13</name>
    <name evidence="9" type="ORF">P0431G05.2</name>
</gene>
<dbReference type="EMBL" id="AB531488">
    <property type="protein sequence ID" value="BAJ07191.1"/>
    <property type="molecule type" value="mRNA"/>
</dbReference>
<dbReference type="EMBL" id="AC087551">
    <property type="protein sequence ID" value="AAV32215.1"/>
    <property type="status" value="ALT_SEQ"/>
    <property type="molecule type" value="Genomic_DNA"/>
</dbReference>
<dbReference type="EMBL" id="AC093492">
    <property type="protein sequence ID" value="AAV31326.1"/>
    <property type="status" value="ALT_SEQ"/>
    <property type="molecule type" value="Genomic_DNA"/>
</dbReference>
<dbReference type="EMBL" id="AP008211">
    <property type="protein sequence ID" value="BAF16598.1"/>
    <property type="status" value="ALT_SEQ"/>
    <property type="molecule type" value="Genomic_DNA"/>
</dbReference>
<dbReference type="EMBL" id="AP014961">
    <property type="protein sequence ID" value="BAS92345.1"/>
    <property type="status" value="ALT_SEQ"/>
    <property type="molecule type" value="Genomic_DNA"/>
</dbReference>
<dbReference type="EMBL" id="CM000142">
    <property type="protein sequence ID" value="EEE62380.1"/>
    <property type="molecule type" value="Genomic_DNA"/>
</dbReference>
<dbReference type="EMBL" id="AK064328">
    <property type="status" value="NOT_ANNOTATED_CDS"/>
    <property type="molecule type" value="mRNA"/>
</dbReference>
<dbReference type="RefSeq" id="XP_015639990.1">
    <property type="nucleotide sequence ID" value="XM_015784504.1"/>
</dbReference>
<dbReference type="SMR" id="B9FMJ3"/>
<dbReference type="FunCoup" id="B9FMJ3">
    <property type="interactions" value="2123"/>
</dbReference>
<dbReference type="STRING" id="39947.B9FMJ3"/>
<dbReference type="PaxDb" id="39947-B9FMJ3"/>
<dbReference type="EnsemblPlants" id="Os05t0154700-01">
    <property type="protein sequence ID" value="Os05t0154700-01"/>
    <property type="gene ID" value="Os05g0154700"/>
</dbReference>
<dbReference type="Gramene" id="Os05t0154700-01">
    <property type="protein sequence ID" value="Os05t0154700-01"/>
    <property type="gene ID" value="Os05g0154700"/>
</dbReference>
<dbReference type="KEGG" id="dosa:Os05g0154700"/>
<dbReference type="eggNOG" id="KOG0246">
    <property type="taxonomic scope" value="Eukaryota"/>
</dbReference>
<dbReference type="InParanoid" id="B9FMJ3"/>
<dbReference type="OrthoDB" id="3176171at2759"/>
<dbReference type="Proteomes" id="UP000000763">
    <property type="component" value="Chromosome 5"/>
</dbReference>
<dbReference type="Proteomes" id="UP000007752">
    <property type="component" value="Chromosome 5"/>
</dbReference>
<dbReference type="Proteomes" id="UP000059680">
    <property type="component" value="Chromosome 5"/>
</dbReference>
<dbReference type="GO" id="GO:0005783">
    <property type="term" value="C:endoplasmic reticulum"/>
    <property type="evidence" value="ECO:0007669"/>
    <property type="project" value="UniProtKB-KW"/>
</dbReference>
<dbReference type="GO" id="GO:0005795">
    <property type="term" value="C:Golgi stack"/>
    <property type="evidence" value="ECO:0007669"/>
    <property type="project" value="EnsemblPlants"/>
</dbReference>
<dbReference type="GO" id="GO:0043231">
    <property type="term" value="C:intracellular membrane-bounded organelle"/>
    <property type="evidence" value="ECO:0000314"/>
    <property type="project" value="UniProtKB"/>
</dbReference>
<dbReference type="GO" id="GO:0005874">
    <property type="term" value="C:microtubule"/>
    <property type="evidence" value="ECO:0000318"/>
    <property type="project" value="GO_Central"/>
</dbReference>
<dbReference type="GO" id="GO:0009531">
    <property type="term" value="C:secondary cell wall"/>
    <property type="evidence" value="ECO:0007669"/>
    <property type="project" value="EnsemblPlants"/>
</dbReference>
<dbReference type="GO" id="GO:0005524">
    <property type="term" value="F:ATP binding"/>
    <property type="evidence" value="ECO:0007669"/>
    <property type="project" value="UniProtKB-KW"/>
</dbReference>
<dbReference type="GO" id="GO:0008017">
    <property type="term" value="F:microtubule binding"/>
    <property type="evidence" value="ECO:0007669"/>
    <property type="project" value="InterPro"/>
</dbReference>
<dbReference type="GO" id="GO:0003777">
    <property type="term" value="F:microtubule motor activity"/>
    <property type="evidence" value="ECO:0000318"/>
    <property type="project" value="GO_Central"/>
</dbReference>
<dbReference type="GO" id="GO:0090058">
    <property type="term" value="P:metaxylem development"/>
    <property type="evidence" value="ECO:0007669"/>
    <property type="project" value="EnsemblPlants"/>
</dbReference>
<dbReference type="GO" id="GO:0007019">
    <property type="term" value="P:microtubule depolymerization"/>
    <property type="evidence" value="ECO:0000318"/>
    <property type="project" value="GO_Central"/>
</dbReference>
<dbReference type="GO" id="GO:0007018">
    <property type="term" value="P:microtubule-based movement"/>
    <property type="evidence" value="ECO:0007669"/>
    <property type="project" value="InterPro"/>
</dbReference>
<dbReference type="GO" id="GO:0009834">
    <property type="term" value="P:plant-type secondary cell wall biogenesis"/>
    <property type="evidence" value="ECO:0007669"/>
    <property type="project" value="EnsemblPlants"/>
</dbReference>
<dbReference type="GO" id="GO:1903338">
    <property type="term" value="P:regulation of cell wall organization or biogenesis"/>
    <property type="evidence" value="ECO:0000315"/>
    <property type="project" value="UniProtKB"/>
</dbReference>
<dbReference type="GO" id="GO:0010090">
    <property type="term" value="P:trichome morphogenesis"/>
    <property type="evidence" value="ECO:0007669"/>
    <property type="project" value="EnsemblPlants"/>
</dbReference>
<dbReference type="CDD" id="cd01367">
    <property type="entry name" value="KISc_KIF2_like"/>
    <property type="match status" value="1"/>
</dbReference>
<dbReference type="FunFam" id="3.40.850.10:FF:000012">
    <property type="entry name" value="Kinesin-like protein"/>
    <property type="match status" value="1"/>
</dbReference>
<dbReference type="Gene3D" id="3.40.850.10">
    <property type="entry name" value="Kinesin motor domain"/>
    <property type="match status" value="1"/>
</dbReference>
<dbReference type="InterPro" id="IPR027640">
    <property type="entry name" value="Kinesin-like_fam"/>
</dbReference>
<dbReference type="InterPro" id="IPR019821">
    <property type="entry name" value="Kinesin_motor_CS"/>
</dbReference>
<dbReference type="InterPro" id="IPR001752">
    <property type="entry name" value="Kinesin_motor_dom"/>
</dbReference>
<dbReference type="InterPro" id="IPR036961">
    <property type="entry name" value="Kinesin_motor_dom_sf"/>
</dbReference>
<dbReference type="InterPro" id="IPR027417">
    <property type="entry name" value="P-loop_NTPase"/>
</dbReference>
<dbReference type="PANTHER" id="PTHR47971:SF23">
    <property type="entry name" value="KINESIN-LIKE PROTEIN KIN-13A"/>
    <property type="match status" value="1"/>
</dbReference>
<dbReference type="PANTHER" id="PTHR47971">
    <property type="entry name" value="KINESIN-RELATED PROTEIN 6"/>
    <property type="match status" value="1"/>
</dbReference>
<dbReference type="Pfam" id="PF00225">
    <property type="entry name" value="Kinesin"/>
    <property type="match status" value="1"/>
</dbReference>
<dbReference type="PRINTS" id="PR00380">
    <property type="entry name" value="KINESINHEAVY"/>
</dbReference>
<dbReference type="SMART" id="SM00129">
    <property type="entry name" value="KISc"/>
    <property type="match status" value="1"/>
</dbReference>
<dbReference type="SUPFAM" id="SSF52540">
    <property type="entry name" value="P-loop containing nucleoside triphosphate hydrolases"/>
    <property type="match status" value="1"/>
</dbReference>
<dbReference type="PROSITE" id="PS00411">
    <property type="entry name" value="KINESIN_MOTOR_1"/>
    <property type="match status" value="1"/>
</dbReference>
<dbReference type="PROSITE" id="PS50067">
    <property type="entry name" value="KINESIN_MOTOR_2"/>
    <property type="match status" value="1"/>
</dbReference>
<sequence>MGDSGDAVMARWLQSAGLQHLAASSTSSSSASTAGGGVDPRGGGGVGVGALGGGAGGGSLLPSLLMQGYGPQSIEEKQRLYMLLRSLNFNGETAPPSISEPYTPTAQSFGGGNSLEGFYSPELRGELGAGLLDLHAMDDTELLSEDVASEPFEPSPFIPKEMDEDDDDMLPGSQPGPSDNYNAVANEKESTARENNVAKIKVVVRKRPLNRKEVSRKEEDIITVHDSSSLTVYEPKLKVDLTAYVEKHEFCFDAVLDEQVSNDEVYRETVEPIIPIIFQRTKATCFAYGQTGSGKTYTMQPLPLRAAQDMVRLLHQPVYRNQNFKLWLSYFEIYGGKLFDLLSDRRQLLMREDGKKQVCIVGLQEFEVSDVQIVKEYIERGNAARSTGSTGANEESSRSHAILQLAIKKHIIVTDTRRQRDRDANESKNTKAVGKISFIDLAGSERGADTTDNDRQTRIEGAEINKSLLALKECIRALDNDQIHIPFRGSKLTEVLRDSFVGNSRTVMISCISPNAGSCEHTLNTLRYADRVKSLSKGSNTRKEQPTGPTIPSSKDSSSAPSYPMPIETEEIANQIQEKRPVETSRKAAENFTSNSSMEPDRNPVSMIPSYSNRGKEENGSSGLNDRERVDLNSSRISYNSKPQSVQSSANLQEEEKVTKVSPPRRKAYRDDKPERQSNYAKKDSGPETSRPGYKVQQAKQLQQQQRPTSASASQNSSRQSEKESSCDDVEIDAILEEEEALIAAHRKEIENTMEIVREEMNLLAEVDQPGSLIDNYVTQLSFLLSRKAAGLVSLQARLARFQHRLKEQEILSRKKSSR</sequence>
<comment type="subcellular location">
    <subcellularLocation>
        <location evidence="4">Microsome</location>
    </subcellularLocation>
</comment>
<comment type="tissue specificity">
    <text evidence="4">Ubiquitous.</text>
</comment>
<comment type="developmental stage">
    <text evidence="4">Highly expressed in developing organs.</text>
</comment>
<comment type="similarity">
    <text evidence="6">Belongs to the TRAFAC class myosin-kinesin ATPase superfamily. Kinesin family. KIN-13 subfamily.</text>
</comment>
<comment type="sequence caution" evidence="7">
    <conflict type="erroneous gene model prediction">
        <sequence resource="EMBL-CDS" id="AAV31326"/>
    </conflict>
</comment>
<comment type="sequence caution" evidence="7">
    <conflict type="erroneous gene model prediction">
        <sequence resource="EMBL-CDS" id="AAV32215"/>
    </conflict>
</comment>
<comment type="sequence caution" evidence="7">
    <conflict type="erroneous gene model prediction">
        <sequence resource="EMBL-CDS" id="BAF16598"/>
    </conflict>
</comment>
<comment type="sequence caution" evidence="7">
    <conflict type="erroneous gene model prediction">
        <sequence resource="EMBL-CDS" id="BAS92345"/>
    </conflict>
</comment>
<proteinExistence type="evidence at protein level"/>
<evidence type="ECO:0000255" key="1"/>
<evidence type="ECO:0000255" key="2">
    <source>
        <dbReference type="PROSITE-ProRule" id="PRU00283"/>
    </source>
</evidence>
<evidence type="ECO:0000256" key="3">
    <source>
        <dbReference type="SAM" id="MobiDB-lite"/>
    </source>
</evidence>
<evidence type="ECO:0000269" key="4">
    <source>
    </source>
</evidence>
<evidence type="ECO:0000303" key="5">
    <source>
    </source>
</evidence>
<evidence type="ECO:0000303" key="6">
    <source>
    </source>
</evidence>
<evidence type="ECO:0000305" key="7"/>
<evidence type="ECO:0000312" key="8">
    <source>
        <dbReference type="EMBL" id="AAV31326.1"/>
    </source>
</evidence>
<evidence type="ECO:0000312" key="9">
    <source>
        <dbReference type="EMBL" id="AAV32215.1"/>
    </source>
</evidence>
<evidence type="ECO:0000312" key="10">
    <source>
        <dbReference type="EMBL" id="BAJ07191.1"/>
    </source>
</evidence>
<evidence type="ECO:0000312" key="11">
    <source>
        <dbReference type="EMBL" id="BAS92345.1"/>
    </source>
</evidence>
<evidence type="ECO:0000312" key="12">
    <source>
        <dbReference type="EMBL" id="EEE62380.1"/>
    </source>
</evidence>